<organism>
    <name type="scientific">Streptococcus pyogenes serotype M6 (strain ATCC BAA-946 / MGAS10394)</name>
    <dbReference type="NCBI Taxonomy" id="286636"/>
    <lineage>
        <taxon>Bacteria</taxon>
        <taxon>Bacillati</taxon>
        <taxon>Bacillota</taxon>
        <taxon>Bacilli</taxon>
        <taxon>Lactobacillales</taxon>
        <taxon>Streptococcaceae</taxon>
        <taxon>Streptococcus</taxon>
    </lineage>
</organism>
<name>TRHO_STRP6</name>
<accession>Q5XCI5</accession>
<comment type="function">
    <text evidence="1">Catalyzes oxygen-dependent 5-hydroxyuridine (ho5U) modification at position 34 in tRNAs.</text>
</comment>
<comment type="catalytic activity">
    <reaction evidence="1">
        <text>uridine(34) in tRNA + AH2 + O2 = 5-hydroxyuridine(34) in tRNA + A + H2O</text>
        <dbReference type="Rhea" id="RHEA:64224"/>
        <dbReference type="Rhea" id="RHEA-COMP:11727"/>
        <dbReference type="Rhea" id="RHEA-COMP:13381"/>
        <dbReference type="ChEBI" id="CHEBI:13193"/>
        <dbReference type="ChEBI" id="CHEBI:15377"/>
        <dbReference type="ChEBI" id="CHEBI:15379"/>
        <dbReference type="ChEBI" id="CHEBI:17499"/>
        <dbReference type="ChEBI" id="CHEBI:65315"/>
        <dbReference type="ChEBI" id="CHEBI:136877"/>
    </reaction>
</comment>
<comment type="similarity">
    <text evidence="1">Belongs to the TrhO family.</text>
</comment>
<protein>
    <recommendedName>
        <fullName evidence="1">tRNA uridine(34) hydroxylase</fullName>
        <ecNumber evidence="1">1.14.-.-</ecNumber>
    </recommendedName>
    <alternativeName>
        <fullName evidence="1">tRNA hydroxylation protein O</fullName>
    </alternativeName>
</protein>
<reference key="1">
    <citation type="journal article" date="2004" name="J. Infect. Dis.">
        <title>Progress toward characterization of the group A Streptococcus metagenome: complete genome sequence of a macrolide-resistant serotype M6 strain.</title>
        <authorList>
            <person name="Banks D.J."/>
            <person name="Porcella S.F."/>
            <person name="Barbian K.D."/>
            <person name="Beres S.B."/>
            <person name="Philips L.E."/>
            <person name="Voyich J.M."/>
            <person name="DeLeo F.R."/>
            <person name="Martin J.M."/>
            <person name="Somerville G.A."/>
            <person name="Musser J.M."/>
        </authorList>
    </citation>
    <scope>NUCLEOTIDE SEQUENCE [LARGE SCALE GENOMIC DNA]</scope>
    <source>
        <strain>ATCC BAA-946 / MGAS10394</strain>
    </source>
</reference>
<keyword id="KW-0560">Oxidoreductase</keyword>
<keyword id="KW-0819">tRNA processing</keyword>
<gene>
    <name evidence="1" type="primary">trhO</name>
    <name type="ordered locus">M6_Spy0743</name>
</gene>
<dbReference type="EC" id="1.14.-.-" evidence="1"/>
<dbReference type="EMBL" id="CP000003">
    <property type="protein sequence ID" value="AAT86878.1"/>
    <property type="molecule type" value="Genomic_DNA"/>
</dbReference>
<dbReference type="RefSeq" id="WP_011184440.1">
    <property type="nucleotide sequence ID" value="NC_006086.1"/>
</dbReference>
<dbReference type="SMR" id="Q5XCI5"/>
<dbReference type="KEGG" id="spa:M6_Spy0743"/>
<dbReference type="HOGENOM" id="CLU_038878_1_0_9"/>
<dbReference type="Proteomes" id="UP000001167">
    <property type="component" value="Chromosome"/>
</dbReference>
<dbReference type="GO" id="GO:0016705">
    <property type="term" value="F:oxidoreductase activity, acting on paired donors, with incorporation or reduction of molecular oxygen"/>
    <property type="evidence" value="ECO:0007669"/>
    <property type="project" value="UniProtKB-UniRule"/>
</dbReference>
<dbReference type="GO" id="GO:0006400">
    <property type="term" value="P:tRNA modification"/>
    <property type="evidence" value="ECO:0007669"/>
    <property type="project" value="UniProtKB-UniRule"/>
</dbReference>
<dbReference type="CDD" id="cd01518">
    <property type="entry name" value="RHOD_YceA"/>
    <property type="match status" value="1"/>
</dbReference>
<dbReference type="Gene3D" id="3.30.70.100">
    <property type="match status" value="1"/>
</dbReference>
<dbReference type="Gene3D" id="3.40.250.10">
    <property type="entry name" value="Rhodanese-like domain"/>
    <property type="match status" value="1"/>
</dbReference>
<dbReference type="HAMAP" id="MF_00469">
    <property type="entry name" value="TrhO"/>
    <property type="match status" value="1"/>
</dbReference>
<dbReference type="InterPro" id="IPR001763">
    <property type="entry name" value="Rhodanese-like_dom"/>
</dbReference>
<dbReference type="InterPro" id="IPR036873">
    <property type="entry name" value="Rhodanese-like_dom_sf"/>
</dbReference>
<dbReference type="InterPro" id="IPR022111">
    <property type="entry name" value="Rhodanese_C"/>
</dbReference>
<dbReference type="InterPro" id="IPR020936">
    <property type="entry name" value="TrhO"/>
</dbReference>
<dbReference type="InterPro" id="IPR040503">
    <property type="entry name" value="TRHO_N"/>
</dbReference>
<dbReference type="NCBIfam" id="NF001135">
    <property type="entry name" value="PRK00142.1-3"/>
    <property type="match status" value="1"/>
</dbReference>
<dbReference type="NCBIfam" id="NF001137">
    <property type="entry name" value="PRK00142.1-5"/>
    <property type="match status" value="1"/>
</dbReference>
<dbReference type="PANTHER" id="PTHR43268:SF3">
    <property type="entry name" value="RHODANESE-LIKE DOMAIN-CONTAINING PROTEIN 7-RELATED"/>
    <property type="match status" value="1"/>
</dbReference>
<dbReference type="PANTHER" id="PTHR43268">
    <property type="entry name" value="THIOSULFATE SULFURTRANSFERASE/RHODANESE-LIKE DOMAIN-CONTAINING PROTEIN 2"/>
    <property type="match status" value="1"/>
</dbReference>
<dbReference type="Pfam" id="PF00581">
    <property type="entry name" value="Rhodanese"/>
    <property type="match status" value="1"/>
</dbReference>
<dbReference type="Pfam" id="PF12368">
    <property type="entry name" value="Rhodanese_C"/>
    <property type="match status" value="1"/>
</dbReference>
<dbReference type="Pfam" id="PF17773">
    <property type="entry name" value="UPF0176_N"/>
    <property type="match status" value="1"/>
</dbReference>
<dbReference type="SMART" id="SM00450">
    <property type="entry name" value="RHOD"/>
    <property type="match status" value="1"/>
</dbReference>
<dbReference type="SUPFAM" id="SSF52821">
    <property type="entry name" value="Rhodanese/Cell cycle control phosphatase"/>
    <property type="match status" value="1"/>
</dbReference>
<dbReference type="PROSITE" id="PS50206">
    <property type="entry name" value="RHODANESE_3"/>
    <property type="match status" value="1"/>
</dbReference>
<proteinExistence type="inferred from homology"/>
<feature type="chain" id="PRO_0000161527" description="tRNA uridine(34) hydroxylase">
    <location>
        <begin position="1"/>
        <end position="328"/>
    </location>
</feature>
<feature type="domain" description="Rhodanese" evidence="1">
    <location>
        <begin position="130"/>
        <end position="224"/>
    </location>
</feature>
<feature type="active site" description="Cysteine persulfide intermediate" evidence="1">
    <location>
        <position position="184"/>
    </location>
</feature>
<sequence>MSEKIRVLLYYKYVSIENAQEYAAKHLEFCKSIGLKGRILIADEGINGTVSGDYETTQKYMDWVHSDERFADLWFKIDEENQQAFRKMFVRYKKEIVHLGLEDNNFDSDINPLETTGKYLNPKQFKEALLDEDTVVLDTRNDYEYDLGHFRGAIRPDIRNFRELPQWVRDNKDKFMEKRVVVYCTGGVRCEKFSGWMVREGFKDVGQLHGGIATYGKDPEVQGELWDGAMYVFDDRISVPINHVNPTVISKDYFDGTPCERYVNCANPFCNKQIFASEENETKYVRGCSPECRAHERNRYVQENGLSRQEWAERLEAIGESLPEFVGA</sequence>
<evidence type="ECO:0000255" key="1">
    <source>
        <dbReference type="HAMAP-Rule" id="MF_00469"/>
    </source>
</evidence>